<proteinExistence type="inferred from homology"/>
<accession>A8A549</accession>
<comment type="function">
    <text evidence="1">Forms an efflux pump with AaeA. Could function as a metabolic relief valve, allowing to eliminate certain compounds when they accumulate to high levels in the cell.</text>
</comment>
<comment type="subcellular location">
    <subcellularLocation>
        <location evidence="1">Cell inner membrane</location>
        <topology evidence="1">Multi-pass membrane protein</topology>
    </subcellularLocation>
</comment>
<comment type="induction">
    <text evidence="1">Positively coregulated with aaeA and aaeX by AaeR.</text>
</comment>
<comment type="similarity">
    <text evidence="1">Belongs to the aromatic acid exporter ArAE (TC 2.A.85) family.</text>
</comment>
<dbReference type="EMBL" id="CP000802">
    <property type="protein sequence ID" value="ABV07653.1"/>
    <property type="molecule type" value="Genomic_DNA"/>
</dbReference>
<dbReference type="RefSeq" id="WP_000510921.1">
    <property type="nucleotide sequence ID" value="NC_009800.1"/>
</dbReference>
<dbReference type="SMR" id="A8A549"/>
<dbReference type="KEGG" id="ecx:EcHS_A3429"/>
<dbReference type="HOGENOM" id="CLU_027647_0_0_6"/>
<dbReference type="GO" id="GO:0005886">
    <property type="term" value="C:plasma membrane"/>
    <property type="evidence" value="ECO:0007669"/>
    <property type="project" value="UniProtKB-SubCell"/>
</dbReference>
<dbReference type="GO" id="GO:0022857">
    <property type="term" value="F:transmembrane transporter activity"/>
    <property type="evidence" value="ECO:0007669"/>
    <property type="project" value="UniProtKB-UniRule"/>
</dbReference>
<dbReference type="GO" id="GO:0046942">
    <property type="term" value="P:carboxylic acid transport"/>
    <property type="evidence" value="ECO:0007669"/>
    <property type="project" value="InterPro"/>
</dbReference>
<dbReference type="HAMAP" id="MF_01545">
    <property type="entry name" value="AaeB"/>
    <property type="match status" value="1"/>
</dbReference>
<dbReference type="InterPro" id="IPR006726">
    <property type="entry name" value="PHBA_efflux_AaeB/fusaric-R"/>
</dbReference>
<dbReference type="InterPro" id="IPR023706">
    <property type="entry name" value="PHBA_efflux_pump_AaeB"/>
</dbReference>
<dbReference type="NCBIfam" id="NF007916">
    <property type="entry name" value="PRK10631.1"/>
    <property type="match status" value="1"/>
</dbReference>
<dbReference type="PANTHER" id="PTHR30509:SF9">
    <property type="entry name" value="MULTIDRUG RESISTANCE PROTEIN MDTO"/>
    <property type="match status" value="1"/>
</dbReference>
<dbReference type="PANTHER" id="PTHR30509">
    <property type="entry name" value="P-HYDROXYBENZOIC ACID EFFLUX PUMP SUBUNIT-RELATED"/>
    <property type="match status" value="1"/>
</dbReference>
<dbReference type="Pfam" id="PF04632">
    <property type="entry name" value="FUSC"/>
    <property type="match status" value="1"/>
</dbReference>
<feature type="chain" id="PRO_1000068807" description="p-hydroxybenzoic acid efflux pump subunit AaeB">
    <location>
        <begin position="1"/>
        <end position="655"/>
    </location>
</feature>
<feature type="transmembrane region" description="Helical" evidence="1">
    <location>
        <begin position="13"/>
        <end position="33"/>
    </location>
</feature>
<feature type="transmembrane region" description="Helical" evidence="1">
    <location>
        <begin position="38"/>
        <end position="58"/>
    </location>
</feature>
<feature type="transmembrane region" description="Helical" evidence="1">
    <location>
        <begin position="67"/>
        <end position="89"/>
    </location>
</feature>
<feature type="transmembrane region" description="Helical" evidence="1">
    <location>
        <begin position="93"/>
        <end position="112"/>
    </location>
</feature>
<feature type="transmembrane region" description="Helical" evidence="1">
    <location>
        <begin position="121"/>
        <end position="141"/>
    </location>
</feature>
<feature type="transmembrane region" description="Helical" evidence="1">
    <location>
        <begin position="152"/>
        <end position="172"/>
    </location>
</feature>
<feature type="transmembrane region" description="Helical" evidence="1">
    <location>
        <begin position="370"/>
        <end position="390"/>
    </location>
</feature>
<feature type="transmembrane region" description="Helical" evidence="1">
    <location>
        <begin position="407"/>
        <end position="427"/>
    </location>
</feature>
<feature type="transmembrane region" description="Helical" evidence="1">
    <location>
        <begin position="431"/>
        <end position="451"/>
    </location>
</feature>
<feature type="transmembrane region" description="Helical" evidence="1">
    <location>
        <begin position="459"/>
        <end position="479"/>
    </location>
</feature>
<feature type="transmembrane region" description="Helical" evidence="1">
    <location>
        <begin position="482"/>
        <end position="502"/>
    </location>
</feature>
<reference key="1">
    <citation type="journal article" date="2008" name="J. Bacteriol.">
        <title>The pangenome structure of Escherichia coli: comparative genomic analysis of E. coli commensal and pathogenic isolates.</title>
        <authorList>
            <person name="Rasko D.A."/>
            <person name="Rosovitz M.J."/>
            <person name="Myers G.S.A."/>
            <person name="Mongodin E.F."/>
            <person name="Fricke W.F."/>
            <person name="Gajer P."/>
            <person name="Crabtree J."/>
            <person name="Sebaihia M."/>
            <person name="Thomson N.R."/>
            <person name="Chaudhuri R."/>
            <person name="Henderson I.R."/>
            <person name="Sperandio V."/>
            <person name="Ravel J."/>
        </authorList>
    </citation>
    <scope>NUCLEOTIDE SEQUENCE [LARGE SCALE GENOMIC DNA]</scope>
    <source>
        <strain>HS</strain>
    </source>
</reference>
<protein>
    <recommendedName>
        <fullName evidence="1">p-hydroxybenzoic acid efflux pump subunit AaeB</fullName>
        <shortName evidence="1">pHBA efflux pump protein B</shortName>
    </recommendedName>
</protein>
<evidence type="ECO:0000255" key="1">
    <source>
        <dbReference type="HAMAP-Rule" id="MF_01545"/>
    </source>
</evidence>
<gene>
    <name evidence="1" type="primary">aaeB</name>
    <name type="ordered locus">EcHS_A3429</name>
</gene>
<organism>
    <name type="scientific">Escherichia coli O9:H4 (strain HS)</name>
    <dbReference type="NCBI Taxonomy" id="331112"/>
    <lineage>
        <taxon>Bacteria</taxon>
        <taxon>Pseudomonadati</taxon>
        <taxon>Pseudomonadota</taxon>
        <taxon>Gammaproteobacteria</taxon>
        <taxon>Enterobacterales</taxon>
        <taxon>Enterobacteriaceae</taxon>
        <taxon>Escherichia</taxon>
    </lineage>
</organism>
<keyword id="KW-0997">Cell inner membrane</keyword>
<keyword id="KW-1003">Cell membrane</keyword>
<keyword id="KW-0472">Membrane</keyword>
<keyword id="KW-0812">Transmembrane</keyword>
<keyword id="KW-1133">Transmembrane helix</keyword>
<keyword id="KW-0813">Transport</keyword>
<sequence length="655" mass="73601">MGIFSIANQHIRFAVKLATAIVLALFVGFHFQLETPRWAVLTAAIVAAGPAFAAGGEPYSGAIRYRGFLRIIGTFIGCIAGLVIIIAMIHAPLLMILVCCIWAGFCTWISSLVRIENSYAWGLAGYTALIIVITIQPEPLLTPQFAVERCSEIVIGIVCAIMADLLFSPRSIKQEVDRELESLLVAQYQLMQLCIKHGDGEVVDKAWGDLVRRTTALQGMRSNLNMESSRWARANRRLKAINTLSLTLITQSCETYLIQNTRPELITDTFREFFDTPVETAQDVHKQLKRLRRVIAWTGERETPVTIYSWVAAATRYQLLKRGVISNTKINATEEEILQGEPEVKVEPAERHHAMVNFWRTTLSCILGTLFWLWTGWTSGSGAMVMIAVVTSLAMRLPNPRMVAIDFIYGTLAALPLGLLYFLVIIPNTQQSMLLLCISLAVLGFFLGIEVQKRRLGSMGALASTINIIVLDNPMTFHFSQFLDSALGQIVGCVLAFTVILLVRDKSRDRTGRVLLNQFVSAAVSAMTTNVARRKENHLPALYQQLFLLMNKFPGDLPKFRLALTMIIAHQRLRDAPIPVNEDLSAFHRQMRRTADHVISARSDDKRRRYFGQLLEELEIYQEKLRIWQAPPQVTEPVHRLAGMLHKYQHALTDS</sequence>
<name>AAEB_ECOHS</name>